<name>FSA2_FUSSF</name>
<protein>
    <recommendedName>
        <fullName evidence="6">Diels-Alderase fsa2</fullName>
        <ecNumber evidence="2 4">5.5.1.-</ecNumber>
    </recommendedName>
    <alternativeName>
        <fullName evidence="5">Fusarisetin A biosynthesis protein 2</fullName>
    </alternativeName>
</protein>
<feature type="chain" id="PRO_0000441292" description="Diels-Alderase fsa2">
    <location>
        <begin position="1"/>
        <end position="374"/>
    </location>
</feature>
<feature type="region of interest" description="Beta-sandwich motif" evidence="8">
    <location>
        <begin position="1"/>
        <end position="216"/>
    </location>
</feature>
<feature type="region of interest" description="Beta-barrel motif" evidence="8">
    <location>
        <begin position="216"/>
        <end position="374"/>
    </location>
</feature>
<feature type="mutagenesis site" description="Slightly decreases enzyme activity." evidence="4">
    <original>Q</original>
    <variation>A</variation>
    <location>
        <position position="80"/>
    </location>
</feature>
<feature type="mutagenesis site" description="Abolishes enzyme activity." evidence="4">
    <original>W</original>
    <variation>A</variation>
    <location>
        <position position="216"/>
    </location>
</feature>
<feature type="mutagenesis site" description="Abolishes enzyme activity." evidence="4">
    <original>W</original>
    <variation>A</variation>
    <location>
        <position position="332"/>
    </location>
</feature>
<feature type="mutagenesis site" description="Abolishes enzyme activity." evidence="4">
    <original>N</original>
    <variation>A</variation>
    <location>
        <position position="346"/>
    </location>
</feature>
<feature type="strand" evidence="9">
    <location>
        <begin position="5"/>
        <end position="10"/>
    </location>
</feature>
<feature type="turn" evidence="11">
    <location>
        <begin position="11"/>
        <end position="13"/>
    </location>
</feature>
<feature type="strand" evidence="11">
    <location>
        <begin position="14"/>
        <end position="18"/>
    </location>
</feature>
<feature type="strand" evidence="9">
    <location>
        <begin position="45"/>
        <end position="54"/>
    </location>
</feature>
<feature type="turn" evidence="9">
    <location>
        <begin position="55"/>
        <end position="57"/>
    </location>
</feature>
<feature type="strand" evidence="9">
    <location>
        <begin position="60"/>
        <end position="68"/>
    </location>
</feature>
<feature type="helix" evidence="9">
    <location>
        <begin position="69"/>
        <end position="73"/>
    </location>
</feature>
<feature type="strand" evidence="9">
    <location>
        <begin position="77"/>
        <end position="84"/>
    </location>
</feature>
<feature type="strand" evidence="9">
    <location>
        <begin position="90"/>
        <end position="104"/>
    </location>
</feature>
<feature type="strand" evidence="9">
    <location>
        <begin position="110"/>
        <end position="116"/>
    </location>
</feature>
<feature type="turn" evidence="9">
    <location>
        <begin position="117"/>
        <end position="120"/>
    </location>
</feature>
<feature type="strand" evidence="9">
    <location>
        <begin position="121"/>
        <end position="127"/>
    </location>
</feature>
<feature type="strand" evidence="9">
    <location>
        <begin position="131"/>
        <end position="140"/>
    </location>
</feature>
<feature type="turn" evidence="9">
    <location>
        <begin position="141"/>
        <end position="143"/>
    </location>
</feature>
<feature type="strand" evidence="9">
    <location>
        <begin position="144"/>
        <end position="152"/>
    </location>
</feature>
<feature type="turn" evidence="9">
    <location>
        <begin position="166"/>
        <end position="168"/>
    </location>
</feature>
<feature type="strand" evidence="9">
    <location>
        <begin position="169"/>
        <end position="187"/>
    </location>
</feature>
<feature type="strand" evidence="9">
    <location>
        <begin position="194"/>
        <end position="198"/>
    </location>
</feature>
<feature type="strand" evidence="9">
    <location>
        <begin position="201"/>
        <end position="214"/>
    </location>
</feature>
<feature type="helix" evidence="9">
    <location>
        <begin position="216"/>
        <end position="219"/>
    </location>
</feature>
<feature type="strand" evidence="9">
    <location>
        <begin position="221"/>
        <end position="230"/>
    </location>
</feature>
<feature type="strand" evidence="9">
    <location>
        <begin position="233"/>
        <end position="241"/>
    </location>
</feature>
<feature type="strand" evidence="9">
    <location>
        <begin position="251"/>
        <end position="258"/>
    </location>
</feature>
<feature type="strand" evidence="9">
    <location>
        <begin position="261"/>
        <end position="266"/>
    </location>
</feature>
<feature type="strand" evidence="9">
    <location>
        <begin position="281"/>
        <end position="287"/>
    </location>
</feature>
<feature type="strand" evidence="10">
    <location>
        <begin position="292"/>
        <end position="294"/>
    </location>
</feature>
<feature type="strand" evidence="9">
    <location>
        <begin position="299"/>
        <end position="301"/>
    </location>
</feature>
<feature type="strand" evidence="9">
    <location>
        <begin position="306"/>
        <end position="312"/>
    </location>
</feature>
<feature type="strand" evidence="9">
    <location>
        <begin position="320"/>
        <end position="340"/>
    </location>
</feature>
<feature type="strand" evidence="9">
    <location>
        <begin position="345"/>
        <end position="357"/>
    </location>
</feature>
<feature type="strand" evidence="9">
    <location>
        <begin position="362"/>
        <end position="372"/>
    </location>
</feature>
<sequence>MSNVTVSAFTVDKSISEEHVLPSSFIPGSGNIFPKFTSAIPKTAWELWYFDGISKDDKSSIVIGVTRNAEGLKHGGFKVQVFVIWADERTWHRDLFFPESVVSINESGVTDGIWKDATSNSSISFSCAGDLSKASLVFDVPGVVQGDMHLEALPGDTGLDTDARLGPSVYYVRPIGRASVKAQLSLYSSDATAAEQFSLGTSANGGMDRVWSPLSWPQVMTESYYLRTQVGPYAMQIMRIFPPAGSEDQPSTMARLYREGQLVCVAQHVVTREDALMTHDSLILSKQDNSDSEDVVTGGYRDKNTGYTVEFVEKGNEGQRWKFQVRHERIIWNTPTSRPGPDATGNTGFVEVLCGGTIGESYEGVGTGGQCELS</sequence>
<keyword id="KW-0002">3D-structure</keyword>
<keyword id="KW-0413">Isomerase</keyword>
<accession>A0A0E4AYE7</accession>
<comment type="function">
    <text evidence="1 2 3 4">Diels-Alderase; part of the gene cluster that mediates the biosynthesis of the HIV-1 integrase inhibitor equisetin and of fusarisetin A, both trans-fused decalin-containing tetramic acids showing also antimicrobial activity (PubMed:25770422). The PKS module of fsa1 together with the enoylreductase fsa3 catalyze the formation of the polyketide unit which is then conjugated to L-serine by the condensation domain of the fsa1 NRPS module (PubMed:25770422). Activity of the Dieckmann cyclase domain (RED) results in release of the Dieckmann product intermediate (PubMed:25770422). Diels-Alderase fsa2 is involved in endo-selective Diels-Alder cycloaddition to form the decalin ring, leading to the production of N-desmethylequisetin also called trichosetin (PubMed:25770422, PubMed:28401214, PubMed:29972614, PubMed:34121297). Subsequent N-methylation is carried out by fsa4 to give equisetin (PubMed:25770422). The enzymatic gene responsible for the conversion of equisetin to fusarisetin A has not been identified yet and is probably located outside of the fsa cluster (PubMed:28401214).</text>
</comment>
<comment type="catalytic activity">
    <reaction evidence="2 4">
        <text>(5S)-3-[(2E,6R,8E,10E,12E)-2,6-dimethyltetradeca-2,8,10,12-tetraenoyl]-5-(hydroxymethyl)pyrrolidine-2,4-dione = trichosetin</text>
        <dbReference type="Rhea" id="RHEA:67328"/>
        <dbReference type="ChEBI" id="CHEBI:142061"/>
        <dbReference type="ChEBI" id="CHEBI:169938"/>
    </reaction>
    <physiologicalReaction direction="left-to-right" evidence="2 4">
        <dbReference type="Rhea" id="RHEA:67329"/>
    </physiologicalReaction>
</comment>
<comment type="biophysicochemical properties">
    <kinetics>
        <KM evidence="2">216 uM for polyenoyltretamic acid</KM>
    </kinetics>
    <phDependence>
        <text evidence="2">Optimum pH is 7.</text>
    </phDependence>
    <temperatureDependence>
        <text evidence="2">Optimum temperature is 30 degrees Celsius.</text>
    </temperatureDependence>
</comment>
<comment type="pathway">
    <text evidence="1 2">Mycotoxin biosynthesis.</text>
</comment>
<comment type="disruption phenotype">
    <text evidence="1">Results in the loss of production of equisetin and fusarisetin A (PubMed:25770422).</text>
</comment>
<comment type="similarity">
    <text evidence="7">Belongs to the Diels-Alderase family.</text>
</comment>
<dbReference type="EC" id="5.5.1.-" evidence="2 4"/>
<dbReference type="EMBL" id="LC025956">
    <property type="protein sequence ID" value="BAR40284.1"/>
    <property type="molecule type" value="Genomic_DNA"/>
</dbReference>
<dbReference type="PDB" id="7DMN">
    <property type="method" value="X-ray"/>
    <property type="resolution" value="2.00 A"/>
    <property type="chains" value="A=1-374"/>
</dbReference>
<dbReference type="PDB" id="7E22">
    <property type="method" value="X-ray"/>
    <property type="resolution" value="2.63 A"/>
    <property type="chains" value="A=1-374"/>
</dbReference>
<dbReference type="PDB" id="7E5T">
    <property type="method" value="X-ray"/>
    <property type="resolution" value="2.17 A"/>
    <property type="chains" value="A/B/C/D/E/F/G/H=1-374"/>
</dbReference>
<dbReference type="PDBsum" id="7DMN"/>
<dbReference type="PDBsum" id="7E22"/>
<dbReference type="PDBsum" id="7E5T"/>
<dbReference type="SMR" id="A0A0E4AYE7"/>
<dbReference type="GO" id="GO:0016853">
    <property type="term" value="F:isomerase activity"/>
    <property type="evidence" value="ECO:0007669"/>
    <property type="project" value="UniProtKB-KW"/>
</dbReference>
<dbReference type="InterPro" id="IPR054499">
    <property type="entry name" value="DA_C"/>
</dbReference>
<dbReference type="Pfam" id="PF22903">
    <property type="entry name" value="DA_C"/>
    <property type="match status" value="1"/>
</dbReference>
<dbReference type="Pfam" id="PF24137">
    <property type="entry name" value="DA_N"/>
    <property type="match status" value="1"/>
</dbReference>
<dbReference type="SUPFAM" id="SSF159245">
    <property type="entry name" value="AttH-like"/>
    <property type="match status" value="1"/>
</dbReference>
<organism>
    <name type="scientific">Fusarium sp. (strain FN080326)</name>
    <dbReference type="NCBI Taxonomy" id="1608308"/>
    <lineage>
        <taxon>Eukaryota</taxon>
        <taxon>Fungi</taxon>
        <taxon>Dikarya</taxon>
        <taxon>Ascomycota</taxon>
        <taxon>Pezizomycotina</taxon>
        <taxon>Sordariomycetes</taxon>
        <taxon>Hypocreomycetidae</taxon>
        <taxon>Hypocreales</taxon>
        <taxon>Nectriaceae</taxon>
        <taxon>Fusarium</taxon>
    </lineage>
</organism>
<reference key="1">
    <citation type="journal article" date="2015" name="Biochem. Biophys. Res. Commun.">
        <title>A new enzyme involved in the control of the stereochemistry in the decalin formation during equisetin biosynthesis.</title>
        <authorList>
            <person name="Kato N."/>
            <person name="Nogawa T."/>
            <person name="Hirota H."/>
            <person name="Jang J.H."/>
            <person name="Takahashi S."/>
            <person name="Ahn J.S."/>
            <person name="Osada H."/>
        </authorList>
    </citation>
    <scope>NUCLEOTIDE SEQUENCE [GENOMIC DNA]</scope>
    <scope>FUNCTION</scope>
    <scope>DISRUPTION PHENOTYPE</scope>
    <scope>PATHWAY</scope>
</reference>
<reference key="2">
    <citation type="journal article" date="2017" name="Chem. Commun. (Camb.)">
        <title>Chemo-enzymatic synthesis of equisetin.</title>
        <authorList>
            <person name="Li X."/>
            <person name="Zheng Q."/>
            <person name="Yin J."/>
            <person name="Liu W."/>
            <person name="Gao S."/>
        </authorList>
    </citation>
    <scope>FUNCTION</scope>
    <scope>CATALYTIC ACTIVITY</scope>
    <scope>BIOPHYSICOCHEMICAL PROPERTIES</scope>
    <scope>PATHWAY</scope>
</reference>
<reference key="3">
    <citation type="journal article" date="2018" name="Angew. Chem. Int. Ed.">
        <title>Control of the stereochemical course of [4+2] cycloaddition during trans-decalin formation by Fsa2-family enzymes.</title>
        <authorList>
            <person name="Kato N."/>
            <person name="Nogawa T."/>
            <person name="Takita R."/>
            <person name="Kinugasa K."/>
            <person name="Kanai M."/>
            <person name="Uchiyama M."/>
            <person name="Osada H."/>
            <person name="Takahashi S."/>
        </authorList>
    </citation>
    <scope>FUNCTION</scope>
    <scope>CATALYTIC ACTIVITY</scope>
</reference>
<reference key="4">
    <citation type="journal article" date="2021" name="Angew. Chem. Int. Ed.">
        <title>Molecular basis for two stereoselective Diels-Alderases that produce decalin skeletons*.</title>
        <authorList>
            <person name="Fujiyama K."/>
            <person name="Kato N."/>
            <person name="Re S."/>
            <person name="Kinugasa K."/>
            <person name="Watanabe K."/>
            <person name="Takita R."/>
            <person name="Nogawa T."/>
            <person name="Hino T."/>
            <person name="Osada H."/>
            <person name="Sugita Y."/>
            <person name="Takahashi S."/>
            <person name="Nagano S."/>
        </authorList>
    </citation>
    <scope>X-RAY CRYSTALLOGRAPHY (2.17 ANGSTROMS)</scope>
    <scope>DOMAIN</scope>
    <scope>FUNCTION</scope>
    <scope>CATALYTIC ACTIVITY</scope>
    <scope>MUTAGENESIS OF GLN-80; TRP-216; TRP-332 AND ASN-346</scope>
</reference>
<evidence type="ECO:0000269" key="1">
    <source>
    </source>
</evidence>
<evidence type="ECO:0000269" key="2">
    <source>
    </source>
</evidence>
<evidence type="ECO:0000269" key="3">
    <source>
    </source>
</evidence>
<evidence type="ECO:0000269" key="4">
    <source>
    </source>
</evidence>
<evidence type="ECO:0000303" key="5">
    <source>
    </source>
</evidence>
<evidence type="ECO:0000303" key="6">
    <source>
    </source>
</evidence>
<evidence type="ECO:0000305" key="7"/>
<evidence type="ECO:0000305" key="8">
    <source>
    </source>
</evidence>
<evidence type="ECO:0007829" key="9">
    <source>
        <dbReference type="PDB" id="7DMN"/>
    </source>
</evidence>
<evidence type="ECO:0007829" key="10">
    <source>
        <dbReference type="PDB" id="7E22"/>
    </source>
</evidence>
<evidence type="ECO:0007829" key="11">
    <source>
        <dbReference type="PDB" id="7E5T"/>
    </source>
</evidence>
<gene>
    <name evidence="5" type="primary">fsa2</name>
</gene>
<proteinExistence type="evidence at protein level"/>